<name>RSMC_ECO81</name>
<proteinExistence type="inferred from homology"/>
<organism>
    <name type="scientific">Escherichia coli O81 (strain ED1a)</name>
    <dbReference type="NCBI Taxonomy" id="585397"/>
    <lineage>
        <taxon>Bacteria</taxon>
        <taxon>Pseudomonadati</taxon>
        <taxon>Pseudomonadota</taxon>
        <taxon>Gammaproteobacteria</taxon>
        <taxon>Enterobacterales</taxon>
        <taxon>Enterobacteriaceae</taxon>
        <taxon>Escherichia</taxon>
    </lineage>
</organism>
<feature type="chain" id="PRO_0000369714" description="Ribosomal RNA small subunit methyltransferase C">
    <location>
        <begin position="1"/>
        <end position="343"/>
    </location>
</feature>
<evidence type="ECO:0000255" key="1">
    <source>
        <dbReference type="HAMAP-Rule" id="MF_01862"/>
    </source>
</evidence>
<reference key="1">
    <citation type="journal article" date="2009" name="PLoS Genet.">
        <title>Organised genome dynamics in the Escherichia coli species results in highly diverse adaptive paths.</title>
        <authorList>
            <person name="Touchon M."/>
            <person name="Hoede C."/>
            <person name="Tenaillon O."/>
            <person name="Barbe V."/>
            <person name="Baeriswyl S."/>
            <person name="Bidet P."/>
            <person name="Bingen E."/>
            <person name="Bonacorsi S."/>
            <person name="Bouchier C."/>
            <person name="Bouvet O."/>
            <person name="Calteau A."/>
            <person name="Chiapello H."/>
            <person name="Clermont O."/>
            <person name="Cruveiller S."/>
            <person name="Danchin A."/>
            <person name="Diard M."/>
            <person name="Dossat C."/>
            <person name="Karoui M.E."/>
            <person name="Frapy E."/>
            <person name="Garry L."/>
            <person name="Ghigo J.M."/>
            <person name="Gilles A.M."/>
            <person name="Johnson J."/>
            <person name="Le Bouguenec C."/>
            <person name="Lescat M."/>
            <person name="Mangenot S."/>
            <person name="Martinez-Jehanne V."/>
            <person name="Matic I."/>
            <person name="Nassif X."/>
            <person name="Oztas S."/>
            <person name="Petit M.A."/>
            <person name="Pichon C."/>
            <person name="Rouy Z."/>
            <person name="Ruf C.S."/>
            <person name="Schneider D."/>
            <person name="Tourret J."/>
            <person name="Vacherie B."/>
            <person name="Vallenet D."/>
            <person name="Medigue C."/>
            <person name="Rocha E.P.C."/>
            <person name="Denamur E."/>
        </authorList>
    </citation>
    <scope>NUCLEOTIDE SEQUENCE [LARGE SCALE GENOMIC DNA]</scope>
    <source>
        <strain>ED1a</strain>
    </source>
</reference>
<protein>
    <recommendedName>
        <fullName evidence="1">Ribosomal RNA small subunit methyltransferase C</fullName>
        <ecNumber evidence="1">2.1.1.172</ecNumber>
    </recommendedName>
    <alternativeName>
        <fullName evidence="1">16S rRNA m2G1207 methyltransferase</fullName>
    </alternativeName>
    <alternativeName>
        <fullName evidence="1">rRNA (guanine-N(2)-)-methyltransferase RsmC</fullName>
    </alternativeName>
</protein>
<dbReference type="EC" id="2.1.1.172" evidence="1"/>
<dbReference type="EMBL" id="CU928162">
    <property type="protein sequence ID" value="CAR11192.1"/>
    <property type="molecule type" value="Genomic_DNA"/>
</dbReference>
<dbReference type="RefSeq" id="WP_001272332.1">
    <property type="nucleotide sequence ID" value="NC_011745.1"/>
</dbReference>
<dbReference type="SMR" id="B7MTB6"/>
<dbReference type="KEGG" id="ecq:ECED1_5241"/>
<dbReference type="HOGENOM" id="CLU_049581_0_1_6"/>
<dbReference type="Proteomes" id="UP000000748">
    <property type="component" value="Chromosome"/>
</dbReference>
<dbReference type="GO" id="GO:0005737">
    <property type="term" value="C:cytoplasm"/>
    <property type="evidence" value="ECO:0007669"/>
    <property type="project" value="UniProtKB-SubCell"/>
</dbReference>
<dbReference type="GO" id="GO:0052914">
    <property type="term" value="F:16S rRNA (guanine(1207)-N(2))-methyltransferase activity"/>
    <property type="evidence" value="ECO:0007669"/>
    <property type="project" value="UniProtKB-EC"/>
</dbReference>
<dbReference type="GO" id="GO:0003676">
    <property type="term" value="F:nucleic acid binding"/>
    <property type="evidence" value="ECO:0007669"/>
    <property type="project" value="InterPro"/>
</dbReference>
<dbReference type="CDD" id="cd02440">
    <property type="entry name" value="AdoMet_MTases"/>
    <property type="match status" value="1"/>
</dbReference>
<dbReference type="FunFam" id="3.40.50.150:FF:000058">
    <property type="entry name" value="Ribosomal RNA small subunit methyltransferase C"/>
    <property type="match status" value="1"/>
</dbReference>
<dbReference type="FunFam" id="3.40.50.150:FF:000063">
    <property type="entry name" value="Ribosomal RNA small subunit methyltransferase C"/>
    <property type="match status" value="1"/>
</dbReference>
<dbReference type="Gene3D" id="3.40.50.150">
    <property type="entry name" value="Vaccinia Virus protein VP39"/>
    <property type="match status" value="2"/>
</dbReference>
<dbReference type="HAMAP" id="MF_01862">
    <property type="entry name" value="16SrRNA_methyltr_C"/>
    <property type="match status" value="1"/>
</dbReference>
<dbReference type="InterPro" id="IPR002052">
    <property type="entry name" value="DNA_methylase_N6_adenine_CS"/>
</dbReference>
<dbReference type="InterPro" id="IPR013675">
    <property type="entry name" value="Mtase_sm_N"/>
</dbReference>
<dbReference type="InterPro" id="IPR023543">
    <property type="entry name" value="rRNA_ssu_MeTfrase_C"/>
</dbReference>
<dbReference type="InterPro" id="IPR046977">
    <property type="entry name" value="RsmC/RlmG"/>
</dbReference>
<dbReference type="InterPro" id="IPR029063">
    <property type="entry name" value="SAM-dependent_MTases_sf"/>
</dbReference>
<dbReference type="InterPro" id="IPR007848">
    <property type="entry name" value="Small_mtfrase_dom"/>
</dbReference>
<dbReference type="NCBIfam" id="NF007023">
    <property type="entry name" value="PRK09489.1"/>
    <property type="match status" value="1"/>
</dbReference>
<dbReference type="PANTHER" id="PTHR47816">
    <property type="entry name" value="RIBOSOMAL RNA SMALL SUBUNIT METHYLTRANSFERASE C"/>
    <property type="match status" value="1"/>
</dbReference>
<dbReference type="PANTHER" id="PTHR47816:SF4">
    <property type="entry name" value="RIBOSOMAL RNA SMALL SUBUNIT METHYLTRANSFERASE C"/>
    <property type="match status" value="1"/>
</dbReference>
<dbReference type="Pfam" id="PF05175">
    <property type="entry name" value="MTS"/>
    <property type="match status" value="1"/>
</dbReference>
<dbReference type="Pfam" id="PF08468">
    <property type="entry name" value="MTS_N"/>
    <property type="match status" value="1"/>
</dbReference>
<dbReference type="SUPFAM" id="SSF53335">
    <property type="entry name" value="S-adenosyl-L-methionine-dependent methyltransferases"/>
    <property type="match status" value="1"/>
</dbReference>
<comment type="function">
    <text evidence="1">Specifically methylates the guanine in position 1207 of 16S rRNA in the 30S particle.</text>
</comment>
<comment type="catalytic activity">
    <reaction evidence="1">
        <text>guanosine(1207) in 16S rRNA + S-adenosyl-L-methionine = N(2)-methylguanosine(1207) in 16S rRNA + S-adenosyl-L-homocysteine + H(+)</text>
        <dbReference type="Rhea" id="RHEA:42736"/>
        <dbReference type="Rhea" id="RHEA-COMP:10213"/>
        <dbReference type="Rhea" id="RHEA-COMP:10214"/>
        <dbReference type="ChEBI" id="CHEBI:15378"/>
        <dbReference type="ChEBI" id="CHEBI:57856"/>
        <dbReference type="ChEBI" id="CHEBI:59789"/>
        <dbReference type="ChEBI" id="CHEBI:74269"/>
        <dbReference type="ChEBI" id="CHEBI:74481"/>
        <dbReference type="EC" id="2.1.1.172"/>
    </reaction>
</comment>
<comment type="subunit">
    <text evidence="1">Monomer.</text>
</comment>
<comment type="subcellular location">
    <subcellularLocation>
        <location evidence="1">Cytoplasm</location>
    </subcellularLocation>
</comment>
<comment type="similarity">
    <text evidence="1">Belongs to the methyltransferase superfamily. RsmC family.</text>
</comment>
<gene>
    <name evidence="1" type="primary">rsmC</name>
    <name type="ordered locus">ECED1_5241</name>
</gene>
<accession>B7MTB6</accession>
<keyword id="KW-0963">Cytoplasm</keyword>
<keyword id="KW-0489">Methyltransferase</keyword>
<keyword id="KW-0698">rRNA processing</keyword>
<keyword id="KW-0949">S-adenosyl-L-methionine</keyword>
<keyword id="KW-0808">Transferase</keyword>
<sequence>MSAFTPASEVLLRHSDDFEQSRILFAGDLQDDLPARLDTAASRAHTQQFHHWQVLSRQMGDNARFSLVATADDVADCDTLIYYWPKNKPEAQFQLMNLLSLLPVGTDIFVVGENRSGVRSAEQMLADYAPLNKVDSARRCGLYFGRLEKQPVFDANKFWGEYSVDGLTVKTLPGVFSRDGLDVGSQLLLSTLTPHTKGKVLDVGCGAGVLSVAFARHSPKIRLTLCDVSAPAVEASRATLATNGVEGEVFASNVFSEVKGRFDMIISNPPFHDGMQTSLDAAQTLIRGAVRHLNSGGELRIVANAFLPYPDVLDETFGFHEVIAQTGRFKVYRAIMTRQAKKG</sequence>